<accession>A4TS28</accession>
<proteinExistence type="inferred from homology"/>
<comment type="function">
    <text evidence="1">DNA-dependent RNA polymerase catalyzes the transcription of DNA into RNA using the four ribonucleoside triphosphates as substrates.</text>
</comment>
<comment type="catalytic activity">
    <reaction evidence="1">
        <text>RNA(n) + a ribonucleoside 5'-triphosphate = RNA(n+1) + diphosphate</text>
        <dbReference type="Rhea" id="RHEA:21248"/>
        <dbReference type="Rhea" id="RHEA-COMP:14527"/>
        <dbReference type="Rhea" id="RHEA-COMP:17342"/>
        <dbReference type="ChEBI" id="CHEBI:33019"/>
        <dbReference type="ChEBI" id="CHEBI:61557"/>
        <dbReference type="ChEBI" id="CHEBI:140395"/>
        <dbReference type="EC" id="2.7.7.6"/>
    </reaction>
</comment>
<comment type="cofactor">
    <cofactor evidence="1">
        <name>Mg(2+)</name>
        <dbReference type="ChEBI" id="CHEBI:18420"/>
    </cofactor>
    <text evidence="1">Binds 1 Mg(2+) ion per subunit.</text>
</comment>
<comment type="cofactor">
    <cofactor evidence="1">
        <name>Zn(2+)</name>
        <dbReference type="ChEBI" id="CHEBI:29105"/>
    </cofactor>
    <text evidence="1">Binds 2 Zn(2+) ions per subunit.</text>
</comment>
<comment type="subunit">
    <text evidence="1">The RNAP catalytic core consists of 2 alpha, 1 beta, 1 beta' and 1 omega subunit. When a sigma factor is associated with the core the holoenzyme is formed, which can initiate transcription.</text>
</comment>
<comment type="similarity">
    <text evidence="1">Belongs to the RNA polymerase beta' chain family.</text>
</comment>
<comment type="sequence caution" evidence="2">
    <conflict type="erroneous initiation">
        <sequence resource="EMBL-CDS" id="ABP42090"/>
    </conflict>
    <text>Extended N-terminus.</text>
</comment>
<reference key="1">
    <citation type="submission" date="2007-02" db="EMBL/GenBank/DDBJ databases">
        <title>Complete sequence of chromosome of Yersinia pestis Pestoides F.</title>
        <authorList>
            <consortium name="US DOE Joint Genome Institute"/>
            <person name="Copeland A."/>
            <person name="Lucas S."/>
            <person name="Lapidus A."/>
            <person name="Barry K."/>
            <person name="Detter J.C."/>
            <person name="Glavina del Rio T."/>
            <person name="Hammon N."/>
            <person name="Israni S."/>
            <person name="Dalin E."/>
            <person name="Tice H."/>
            <person name="Pitluck S."/>
            <person name="Di Bartolo G."/>
            <person name="Chain P."/>
            <person name="Malfatti S."/>
            <person name="Shin M."/>
            <person name="Vergez L."/>
            <person name="Schmutz J."/>
            <person name="Larimer F."/>
            <person name="Land M."/>
            <person name="Hauser L."/>
            <person name="Worsham P."/>
            <person name="Chu M."/>
            <person name="Bearden S."/>
            <person name="Garcia E."/>
            <person name="Richardson P."/>
        </authorList>
    </citation>
    <scope>NUCLEOTIDE SEQUENCE [LARGE SCALE GENOMIC DNA]</scope>
    <source>
        <strain>Pestoides F</strain>
    </source>
</reference>
<gene>
    <name evidence="1" type="primary">rpoC</name>
    <name type="ordered locus">YPDSF_3744</name>
</gene>
<name>RPOC_YERPP</name>
<dbReference type="EC" id="2.7.7.6" evidence="1"/>
<dbReference type="EMBL" id="CP000668">
    <property type="protein sequence ID" value="ABP42090.1"/>
    <property type="status" value="ALT_INIT"/>
    <property type="molecule type" value="Genomic_DNA"/>
</dbReference>
<dbReference type="RefSeq" id="WP_002210677.1">
    <property type="nucleotide sequence ID" value="NZ_CP009715.1"/>
</dbReference>
<dbReference type="SMR" id="A4TS28"/>
<dbReference type="GeneID" id="96663777"/>
<dbReference type="KEGG" id="ypp:YPDSF_3744"/>
<dbReference type="PATRIC" id="fig|386656.14.peg.780"/>
<dbReference type="GO" id="GO:0000428">
    <property type="term" value="C:DNA-directed RNA polymerase complex"/>
    <property type="evidence" value="ECO:0007669"/>
    <property type="project" value="UniProtKB-KW"/>
</dbReference>
<dbReference type="GO" id="GO:0003677">
    <property type="term" value="F:DNA binding"/>
    <property type="evidence" value="ECO:0007669"/>
    <property type="project" value="UniProtKB-UniRule"/>
</dbReference>
<dbReference type="GO" id="GO:0003899">
    <property type="term" value="F:DNA-directed RNA polymerase activity"/>
    <property type="evidence" value="ECO:0007669"/>
    <property type="project" value="UniProtKB-UniRule"/>
</dbReference>
<dbReference type="GO" id="GO:0000287">
    <property type="term" value="F:magnesium ion binding"/>
    <property type="evidence" value="ECO:0007669"/>
    <property type="project" value="UniProtKB-UniRule"/>
</dbReference>
<dbReference type="GO" id="GO:0008270">
    <property type="term" value="F:zinc ion binding"/>
    <property type="evidence" value="ECO:0007669"/>
    <property type="project" value="UniProtKB-UniRule"/>
</dbReference>
<dbReference type="GO" id="GO:0006351">
    <property type="term" value="P:DNA-templated transcription"/>
    <property type="evidence" value="ECO:0007669"/>
    <property type="project" value="UniProtKB-UniRule"/>
</dbReference>
<dbReference type="CDD" id="cd02655">
    <property type="entry name" value="RNAP_beta'_C"/>
    <property type="match status" value="1"/>
</dbReference>
<dbReference type="CDD" id="cd01609">
    <property type="entry name" value="RNAP_beta'_N"/>
    <property type="match status" value="1"/>
</dbReference>
<dbReference type="FunFam" id="1.10.132.30:FF:000003">
    <property type="entry name" value="DNA-directed RNA polymerase subunit beta"/>
    <property type="match status" value="1"/>
</dbReference>
<dbReference type="FunFam" id="1.10.150.390:FF:000002">
    <property type="entry name" value="DNA-directed RNA polymerase subunit beta"/>
    <property type="match status" value="1"/>
</dbReference>
<dbReference type="FunFam" id="1.10.274.100:FF:000002">
    <property type="entry name" value="DNA-directed RNA polymerase subunit beta"/>
    <property type="match status" value="1"/>
</dbReference>
<dbReference type="FunFam" id="1.10.40.90:FF:000001">
    <property type="entry name" value="DNA-directed RNA polymerase subunit beta"/>
    <property type="match status" value="1"/>
</dbReference>
<dbReference type="FunFam" id="2.40.50.100:FF:000012">
    <property type="entry name" value="DNA-directed RNA polymerase subunit beta"/>
    <property type="match status" value="1"/>
</dbReference>
<dbReference type="FunFam" id="2.40.50.100:FF:000016">
    <property type="entry name" value="DNA-directed RNA polymerase subunit beta"/>
    <property type="match status" value="1"/>
</dbReference>
<dbReference type="FunFam" id="2.40.50.100:FF:000019">
    <property type="entry name" value="DNA-directed RNA polymerase subunit beta"/>
    <property type="match status" value="1"/>
</dbReference>
<dbReference type="FunFam" id="4.10.860.120:FF:000001">
    <property type="entry name" value="DNA-directed RNA polymerase subunit beta"/>
    <property type="match status" value="1"/>
</dbReference>
<dbReference type="Gene3D" id="1.10.132.30">
    <property type="match status" value="1"/>
</dbReference>
<dbReference type="Gene3D" id="1.10.150.390">
    <property type="match status" value="1"/>
</dbReference>
<dbReference type="Gene3D" id="1.10.1790.20">
    <property type="match status" value="1"/>
</dbReference>
<dbReference type="Gene3D" id="1.10.40.90">
    <property type="match status" value="1"/>
</dbReference>
<dbReference type="Gene3D" id="2.40.40.20">
    <property type="match status" value="1"/>
</dbReference>
<dbReference type="Gene3D" id="2.40.50.100">
    <property type="match status" value="3"/>
</dbReference>
<dbReference type="Gene3D" id="4.10.860.120">
    <property type="entry name" value="RNA polymerase II, clamp domain"/>
    <property type="match status" value="1"/>
</dbReference>
<dbReference type="Gene3D" id="1.10.274.100">
    <property type="entry name" value="RNA polymerase Rpb1, domain 3"/>
    <property type="match status" value="1"/>
</dbReference>
<dbReference type="HAMAP" id="MF_01322">
    <property type="entry name" value="RNApol_bact_RpoC"/>
    <property type="match status" value="1"/>
</dbReference>
<dbReference type="InterPro" id="IPR045867">
    <property type="entry name" value="DNA-dir_RpoC_beta_prime"/>
</dbReference>
<dbReference type="InterPro" id="IPR012754">
    <property type="entry name" value="DNA-dir_RpoC_beta_prime_bact"/>
</dbReference>
<dbReference type="InterPro" id="IPR000722">
    <property type="entry name" value="RNA_pol_asu"/>
</dbReference>
<dbReference type="InterPro" id="IPR006592">
    <property type="entry name" value="RNA_pol_N"/>
</dbReference>
<dbReference type="InterPro" id="IPR007080">
    <property type="entry name" value="RNA_pol_Rpb1_1"/>
</dbReference>
<dbReference type="InterPro" id="IPR007066">
    <property type="entry name" value="RNA_pol_Rpb1_3"/>
</dbReference>
<dbReference type="InterPro" id="IPR042102">
    <property type="entry name" value="RNA_pol_Rpb1_3_sf"/>
</dbReference>
<dbReference type="InterPro" id="IPR007083">
    <property type="entry name" value="RNA_pol_Rpb1_4"/>
</dbReference>
<dbReference type="InterPro" id="IPR007081">
    <property type="entry name" value="RNA_pol_Rpb1_5"/>
</dbReference>
<dbReference type="InterPro" id="IPR044893">
    <property type="entry name" value="RNA_pol_Rpb1_clamp_domain"/>
</dbReference>
<dbReference type="InterPro" id="IPR038120">
    <property type="entry name" value="Rpb1_funnel_sf"/>
</dbReference>
<dbReference type="NCBIfam" id="TIGR02386">
    <property type="entry name" value="rpoC_TIGR"/>
    <property type="match status" value="1"/>
</dbReference>
<dbReference type="PANTHER" id="PTHR19376">
    <property type="entry name" value="DNA-DIRECTED RNA POLYMERASE"/>
    <property type="match status" value="1"/>
</dbReference>
<dbReference type="PANTHER" id="PTHR19376:SF54">
    <property type="entry name" value="DNA-DIRECTED RNA POLYMERASE SUBUNIT BETA"/>
    <property type="match status" value="1"/>
</dbReference>
<dbReference type="Pfam" id="PF04997">
    <property type="entry name" value="RNA_pol_Rpb1_1"/>
    <property type="match status" value="1"/>
</dbReference>
<dbReference type="Pfam" id="PF00623">
    <property type="entry name" value="RNA_pol_Rpb1_2"/>
    <property type="match status" value="2"/>
</dbReference>
<dbReference type="Pfam" id="PF04983">
    <property type="entry name" value="RNA_pol_Rpb1_3"/>
    <property type="match status" value="1"/>
</dbReference>
<dbReference type="Pfam" id="PF05000">
    <property type="entry name" value="RNA_pol_Rpb1_4"/>
    <property type="match status" value="1"/>
</dbReference>
<dbReference type="Pfam" id="PF04998">
    <property type="entry name" value="RNA_pol_Rpb1_5"/>
    <property type="match status" value="1"/>
</dbReference>
<dbReference type="SMART" id="SM00663">
    <property type="entry name" value="RPOLA_N"/>
    <property type="match status" value="1"/>
</dbReference>
<dbReference type="SUPFAM" id="SSF64484">
    <property type="entry name" value="beta and beta-prime subunits of DNA dependent RNA-polymerase"/>
    <property type="match status" value="1"/>
</dbReference>
<keyword id="KW-0240">DNA-directed RNA polymerase</keyword>
<keyword id="KW-0460">Magnesium</keyword>
<keyword id="KW-0479">Metal-binding</keyword>
<keyword id="KW-0548">Nucleotidyltransferase</keyword>
<keyword id="KW-0804">Transcription</keyword>
<keyword id="KW-0808">Transferase</keyword>
<keyword id="KW-0862">Zinc</keyword>
<organism>
    <name type="scientific">Yersinia pestis (strain Pestoides F)</name>
    <dbReference type="NCBI Taxonomy" id="386656"/>
    <lineage>
        <taxon>Bacteria</taxon>
        <taxon>Pseudomonadati</taxon>
        <taxon>Pseudomonadota</taxon>
        <taxon>Gammaproteobacteria</taxon>
        <taxon>Enterobacterales</taxon>
        <taxon>Yersiniaceae</taxon>
        <taxon>Yersinia</taxon>
    </lineage>
</organism>
<feature type="chain" id="PRO_0000353461" description="DNA-directed RNA polymerase subunit beta'">
    <location>
        <begin position="1"/>
        <end position="1406"/>
    </location>
</feature>
<feature type="binding site" evidence="1">
    <location>
        <position position="70"/>
    </location>
    <ligand>
        <name>Zn(2+)</name>
        <dbReference type="ChEBI" id="CHEBI:29105"/>
        <label>1</label>
    </ligand>
</feature>
<feature type="binding site" evidence="1">
    <location>
        <position position="72"/>
    </location>
    <ligand>
        <name>Zn(2+)</name>
        <dbReference type="ChEBI" id="CHEBI:29105"/>
        <label>1</label>
    </ligand>
</feature>
<feature type="binding site" evidence="1">
    <location>
        <position position="85"/>
    </location>
    <ligand>
        <name>Zn(2+)</name>
        <dbReference type="ChEBI" id="CHEBI:29105"/>
        <label>1</label>
    </ligand>
</feature>
<feature type="binding site" evidence="1">
    <location>
        <position position="88"/>
    </location>
    <ligand>
        <name>Zn(2+)</name>
        <dbReference type="ChEBI" id="CHEBI:29105"/>
        <label>1</label>
    </ligand>
</feature>
<feature type="binding site" evidence="1">
    <location>
        <position position="460"/>
    </location>
    <ligand>
        <name>Mg(2+)</name>
        <dbReference type="ChEBI" id="CHEBI:18420"/>
    </ligand>
</feature>
<feature type="binding site" evidence="1">
    <location>
        <position position="462"/>
    </location>
    <ligand>
        <name>Mg(2+)</name>
        <dbReference type="ChEBI" id="CHEBI:18420"/>
    </ligand>
</feature>
<feature type="binding site" evidence="1">
    <location>
        <position position="464"/>
    </location>
    <ligand>
        <name>Mg(2+)</name>
        <dbReference type="ChEBI" id="CHEBI:18420"/>
    </ligand>
</feature>
<feature type="binding site" evidence="1">
    <location>
        <position position="814"/>
    </location>
    <ligand>
        <name>Zn(2+)</name>
        <dbReference type="ChEBI" id="CHEBI:29105"/>
        <label>2</label>
    </ligand>
</feature>
<feature type="binding site" evidence="1">
    <location>
        <position position="888"/>
    </location>
    <ligand>
        <name>Zn(2+)</name>
        <dbReference type="ChEBI" id="CHEBI:29105"/>
        <label>2</label>
    </ligand>
</feature>
<feature type="binding site" evidence="1">
    <location>
        <position position="895"/>
    </location>
    <ligand>
        <name>Zn(2+)</name>
        <dbReference type="ChEBI" id="CHEBI:29105"/>
        <label>2</label>
    </ligand>
</feature>
<feature type="binding site" evidence="1">
    <location>
        <position position="898"/>
    </location>
    <ligand>
        <name>Zn(2+)</name>
        <dbReference type="ChEBI" id="CHEBI:29105"/>
        <label>2</label>
    </ligand>
</feature>
<protein>
    <recommendedName>
        <fullName evidence="1">DNA-directed RNA polymerase subunit beta'</fullName>
        <shortName evidence="1">RNAP subunit beta'</shortName>
        <ecNumber evidence="1">2.7.7.6</ecNumber>
    </recommendedName>
    <alternativeName>
        <fullName evidence="1">RNA polymerase subunit beta'</fullName>
    </alternativeName>
    <alternativeName>
        <fullName evidence="1">Transcriptase subunit beta'</fullName>
    </alternativeName>
</protein>
<evidence type="ECO:0000255" key="1">
    <source>
        <dbReference type="HAMAP-Rule" id="MF_01322"/>
    </source>
</evidence>
<evidence type="ECO:0000305" key="2"/>
<sequence length="1406" mass="154904">MKDLLKFLKAQTKTEEFDAIKIALASPDMIRSWSFGEVKKPETINYRTFKPERDGLFCARIFGPVKDYECLCGKYKRLKHRGVICEKCGVEVTQTKVRRERMGHIELASPTAHIWFLKSLPSRIGLLLDMPLRDIERVLYFESYVVIEGGMTNLERRQILTEEQYLDALEEFGDEFDAKMGAEAIQALLKNMDLEAECEILREELNETNSETKRKKLTKRIKLLEAFVQSGNKPEWMILTVLPVLPPDLRPLVPLDGGRFATSDLNDLYRRVINRNNRLKRLLDLAAPDIIVRNEKRMLQEAVDALLDNGRRGRAITGSNKRPLKSLADMIKGKQGRFRQNLLGKRVDYSGRSVITVGPYLRLHQCGLPKKMALELFKPFIYGKLELRGLATTIKAAKKMVEREEAVVWDILDEVIREHPVLLNRAPTLHRLGIQAFEPVLIEGKAIQLHPLVCAAYNADFDGDQMAVHVPLTLEAQLEARALMMSTNNILSPANGEPIIVPSQDVVLGLYYMTRDCVNAKGEGMVLTGPKEAERIYRAGLASLHARVKVRITEEIRNTEGESITRTSIIDTTVGRAILWMIVPQGLPYSIVNQPLGKKAISKMLNTCYRILGLKPTVIFADQIMYTGFAYAARSGASVGIDDMVIPEAKAGIIEEAETEVAEIQEQFQSGLVTAGERYNKVIDIWAAANERVAKAMMDNLSVEDVVNRDGVVEQQVSFNSIFMMADSGARGSAAQIRQLAGMRGLMAKPDGSIIETPITANFREGLNVLQYFISTHGARKGLADTALKTANSGYLTRRLVDVAQDLVVTEDDCGTHNGIVMTPVIEGGDVKEPLRDRVLGRVTAEEVIKPGSADILVPRNTLLDEKWCDLLEENSVDSVKVRSVVSCETDFGVCANCYGRDLARGHIINKGEAVGVIAAQSIGEPGTQLTMRTFHIGGAASRAAAESSIQVKNKGSLKLSNVKFVTNAAGKLVITSRNTELKLIDEFGRTKESYKVPYGAVMAKGDGAEVQGGETVANWDPHIMPVVTEVSGFIRFADMVDGQTITRQTDELTGLSSLVVLDSAERTGSGKDLRPALKIVDAKGNDVLIPGTDMPAQYFLPGKAIVQLEDGIQIGAGDTLARIPQESSGTKDITGGLPRVADLFEARRPKEPAILAEISGIISFGKETKGKRRLVISPLDGSDAYEEMIPKWRQLNVFEGEVVERGDVVSDGPESPHDILRLRGVHAVTRYITNEVQEVYRLQGVKINDKHIEVIVRQMLRKGTIVDAGSTDFLEGEQAEMSRVKIANRKLAAEGKIEATFTRDLLGITKASLATESFISAASFQETTRVLTEAAVAGKRDELRGLKENVIVGRLIPAGTGYAYHQDRMRRKAQGEAPVVPQVSADEATANLAELLNAGFGNNKG</sequence>